<accession>B7LVU4</accession>
<evidence type="ECO:0000255" key="1">
    <source>
        <dbReference type="HAMAP-Rule" id="MF_00791"/>
    </source>
</evidence>
<protein>
    <recommendedName>
        <fullName evidence="1">Protein ApaG</fullName>
    </recommendedName>
</protein>
<proteinExistence type="inferred from homology"/>
<name>APAG_ESCF3</name>
<sequence>MINSPRVCIQVQSVYIEAQSSPDNERYVFAYTVTIRNLGRAPVQLLGRYWLITNGNGRETEVQGEGVVGVQPLIAPGEEYQYTSGAIIETPLGTMQGHYEMIDENGVPFSIDIPVFRLAVPTLIH</sequence>
<dbReference type="EMBL" id="CU928158">
    <property type="protein sequence ID" value="CAQ87647.1"/>
    <property type="molecule type" value="Genomic_DNA"/>
</dbReference>
<dbReference type="RefSeq" id="WP_000610901.1">
    <property type="nucleotide sequence ID" value="NC_011740.1"/>
</dbReference>
<dbReference type="SMR" id="B7LVU4"/>
<dbReference type="GeneID" id="93777385"/>
<dbReference type="KEGG" id="efe:EFER_0061"/>
<dbReference type="HOGENOM" id="CLU_128074_0_0_6"/>
<dbReference type="OrthoDB" id="9795226at2"/>
<dbReference type="Proteomes" id="UP000000745">
    <property type="component" value="Chromosome"/>
</dbReference>
<dbReference type="GO" id="GO:0070987">
    <property type="term" value="P:error-free translesion synthesis"/>
    <property type="evidence" value="ECO:0007669"/>
    <property type="project" value="TreeGrafter"/>
</dbReference>
<dbReference type="Gene3D" id="2.60.40.1470">
    <property type="entry name" value="ApaG domain"/>
    <property type="match status" value="1"/>
</dbReference>
<dbReference type="HAMAP" id="MF_00791">
    <property type="entry name" value="ApaG"/>
    <property type="match status" value="1"/>
</dbReference>
<dbReference type="InterPro" id="IPR007474">
    <property type="entry name" value="ApaG_domain"/>
</dbReference>
<dbReference type="InterPro" id="IPR036767">
    <property type="entry name" value="ApaG_sf"/>
</dbReference>
<dbReference type="InterPro" id="IPR023065">
    <property type="entry name" value="Uncharacterised_ApaG"/>
</dbReference>
<dbReference type="NCBIfam" id="NF003967">
    <property type="entry name" value="PRK05461.1"/>
    <property type="match status" value="1"/>
</dbReference>
<dbReference type="PANTHER" id="PTHR14289">
    <property type="entry name" value="F-BOX ONLY PROTEIN 3"/>
    <property type="match status" value="1"/>
</dbReference>
<dbReference type="PANTHER" id="PTHR14289:SF16">
    <property type="entry name" value="POLYMERASE DELTA-INTERACTING PROTEIN 2"/>
    <property type="match status" value="1"/>
</dbReference>
<dbReference type="Pfam" id="PF04379">
    <property type="entry name" value="DUF525"/>
    <property type="match status" value="1"/>
</dbReference>
<dbReference type="SUPFAM" id="SSF110069">
    <property type="entry name" value="ApaG-like"/>
    <property type="match status" value="1"/>
</dbReference>
<dbReference type="PROSITE" id="PS51087">
    <property type="entry name" value="APAG"/>
    <property type="match status" value="1"/>
</dbReference>
<organism>
    <name type="scientific">Escherichia fergusonii (strain ATCC 35469 / DSM 13698 / CCUG 18766 / IAM 14443 / JCM 21226 / LMG 7866 / NBRC 102419 / NCTC 12128 / CDC 0568-73)</name>
    <dbReference type="NCBI Taxonomy" id="585054"/>
    <lineage>
        <taxon>Bacteria</taxon>
        <taxon>Pseudomonadati</taxon>
        <taxon>Pseudomonadota</taxon>
        <taxon>Gammaproteobacteria</taxon>
        <taxon>Enterobacterales</taxon>
        <taxon>Enterobacteriaceae</taxon>
        <taxon>Escherichia</taxon>
    </lineage>
</organism>
<gene>
    <name evidence="1" type="primary">apaG</name>
    <name type="ordered locus">EFER_0061</name>
</gene>
<feature type="chain" id="PRO_1000133792" description="Protein ApaG">
    <location>
        <begin position="1"/>
        <end position="125"/>
    </location>
</feature>
<feature type="domain" description="ApaG" evidence="1">
    <location>
        <begin position="1"/>
        <end position="125"/>
    </location>
</feature>
<reference key="1">
    <citation type="journal article" date="2009" name="PLoS Genet.">
        <title>Organised genome dynamics in the Escherichia coli species results in highly diverse adaptive paths.</title>
        <authorList>
            <person name="Touchon M."/>
            <person name="Hoede C."/>
            <person name="Tenaillon O."/>
            <person name="Barbe V."/>
            <person name="Baeriswyl S."/>
            <person name="Bidet P."/>
            <person name="Bingen E."/>
            <person name="Bonacorsi S."/>
            <person name="Bouchier C."/>
            <person name="Bouvet O."/>
            <person name="Calteau A."/>
            <person name="Chiapello H."/>
            <person name="Clermont O."/>
            <person name="Cruveiller S."/>
            <person name="Danchin A."/>
            <person name="Diard M."/>
            <person name="Dossat C."/>
            <person name="Karoui M.E."/>
            <person name="Frapy E."/>
            <person name="Garry L."/>
            <person name="Ghigo J.M."/>
            <person name="Gilles A.M."/>
            <person name="Johnson J."/>
            <person name="Le Bouguenec C."/>
            <person name="Lescat M."/>
            <person name="Mangenot S."/>
            <person name="Martinez-Jehanne V."/>
            <person name="Matic I."/>
            <person name="Nassif X."/>
            <person name="Oztas S."/>
            <person name="Petit M.A."/>
            <person name="Pichon C."/>
            <person name="Rouy Z."/>
            <person name="Ruf C.S."/>
            <person name="Schneider D."/>
            <person name="Tourret J."/>
            <person name="Vacherie B."/>
            <person name="Vallenet D."/>
            <person name="Medigue C."/>
            <person name="Rocha E.P.C."/>
            <person name="Denamur E."/>
        </authorList>
    </citation>
    <scope>NUCLEOTIDE SEQUENCE [LARGE SCALE GENOMIC DNA]</scope>
    <source>
        <strain>ATCC 35469 / DSM 13698 / BCRC 15582 / CCUG 18766 / IAM 14443 / JCM 21226 / LMG 7866 / NBRC 102419 / NCTC 12128 / CDC 0568-73</strain>
    </source>
</reference>